<keyword id="KW-1185">Reference proteome</keyword>
<keyword id="KW-0677">Repeat</keyword>
<keyword id="KW-0853">WD repeat</keyword>
<accession>A2QPW4</accession>
<name>CIAO1_ASPNC</name>
<dbReference type="EMBL" id="AM270157">
    <property type="protein sequence ID" value="CAK45194.1"/>
    <property type="molecule type" value="Genomic_DNA"/>
</dbReference>
<dbReference type="SMR" id="A2QPW4"/>
<dbReference type="EnsemblFungi" id="CAK45194">
    <property type="protein sequence ID" value="CAK45194"/>
    <property type="gene ID" value="An08g00420"/>
</dbReference>
<dbReference type="VEuPathDB" id="FungiDB:An08g00420"/>
<dbReference type="HOGENOM" id="CLU_000288_57_8_1"/>
<dbReference type="Proteomes" id="UP000006706">
    <property type="component" value="Chromosome 8R"/>
</dbReference>
<dbReference type="GO" id="GO:0097361">
    <property type="term" value="C:cytosolic [4Fe-4S] assembly targeting complex"/>
    <property type="evidence" value="ECO:0007669"/>
    <property type="project" value="InterPro"/>
</dbReference>
<dbReference type="GO" id="GO:0016226">
    <property type="term" value="P:iron-sulfur cluster assembly"/>
    <property type="evidence" value="ECO:0007669"/>
    <property type="project" value="UniProtKB-UniRule"/>
</dbReference>
<dbReference type="CDD" id="cd00200">
    <property type="entry name" value="WD40"/>
    <property type="match status" value="1"/>
</dbReference>
<dbReference type="Gene3D" id="2.130.10.10">
    <property type="entry name" value="YVTN repeat-like/Quinoprotein amine dehydrogenase"/>
    <property type="match status" value="1"/>
</dbReference>
<dbReference type="HAMAP" id="MF_03037">
    <property type="entry name" value="ciao1"/>
    <property type="match status" value="1"/>
</dbReference>
<dbReference type="InterPro" id="IPR028608">
    <property type="entry name" value="CIAO1/Cia1"/>
</dbReference>
<dbReference type="InterPro" id="IPR015943">
    <property type="entry name" value="WD40/YVTN_repeat-like_dom_sf"/>
</dbReference>
<dbReference type="InterPro" id="IPR036322">
    <property type="entry name" value="WD40_repeat_dom_sf"/>
</dbReference>
<dbReference type="InterPro" id="IPR001680">
    <property type="entry name" value="WD40_rpt"/>
</dbReference>
<dbReference type="PANTHER" id="PTHR19920:SF0">
    <property type="entry name" value="CYTOSOLIC IRON-SULFUR PROTEIN ASSEMBLY PROTEIN CIAO1-RELATED"/>
    <property type="match status" value="1"/>
</dbReference>
<dbReference type="PANTHER" id="PTHR19920">
    <property type="entry name" value="WD40 PROTEIN CIAO1"/>
    <property type="match status" value="1"/>
</dbReference>
<dbReference type="Pfam" id="PF00400">
    <property type="entry name" value="WD40"/>
    <property type="match status" value="5"/>
</dbReference>
<dbReference type="SMART" id="SM00320">
    <property type="entry name" value="WD40"/>
    <property type="match status" value="7"/>
</dbReference>
<dbReference type="SUPFAM" id="SSF50978">
    <property type="entry name" value="WD40 repeat-like"/>
    <property type="match status" value="1"/>
</dbReference>
<dbReference type="PROSITE" id="PS50082">
    <property type="entry name" value="WD_REPEATS_2"/>
    <property type="match status" value="3"/>
</dbReference>
<dbReference type="PROSITE" id="PS50294">
    <property type="entry name" value="WD_REPEATS_REGION"/>
    <property type="match status" value="2"/>
</dbReference>
<sequence>MAAVDHPASSLPHLQLLSDLTPPSLERTWLTAPHPRLPIVATCSSDKTVRVYSLTNFRLLSTISGGHKRSVRTAAWKPHVQGESVLATGSFDATAGIWRRWDSYGQTTGDEGWGLGQETTTNKSESQEEQAQETDILRQQQATHNENDGADDEDEEWRFAVLLDGHDSEVKSVSWSPSGMLLATCSRDKSIWIWEDLDDGDNNFETVAVMQEHEGDVKCVAWHPVEECLASASYDDTIRIWREDLDDWGQVACLRGHEGTVWFLSGPRIVSCSDDRTVRVWRRQPKEQAAAGGTGMPSILRPTGLDETWEEETVLPKVHDLAVYAVAWSKRTGLLASVGADGRIVIYEERLGVVRTEWVILAVLPGAHGIYEINHVAWANRADRDRDVSKEEEVLVTTADDGSVKVDETVGL</sequence>
<comment type="function">
    <text evidence="1">Essential component of the cytosolic iron-sulfur (Fe/S) protein assembly machinery. Required for the maturation of extramitochondrial Fe/S proteins.</text>
</comment>
<comment type="similarity">
    <text evidence="1">Belongs to the WD repeat CIA1 family.</text>
</comment>
<gene>
    <name type="primary">cia1</name>
    <name type="ORF">An08g00420</name>
</gene>
<organism>
    <name type="scientific">Aspergillus niger (strain ATCC MYA-4892 / CBS 513.88 / FGSC A1513)</name>
    <dbReference type="NCBI Taxonomy" id="425011"/>
    <lineage>
        <taxon>Eukaryota</taxon>
        <taxon>Fungi</taxon>
        <taxon>Dikarya</taxon>
        <taxon>Ascomycota</taxon>
        <taxon>Pezizomycotina</taxon>
        <taxon>Eurotiomycetes</taxon>
        <taxon>Eurotiomycetidae</taxon>
        <taxon>Eurotiales</taxon>
        <taxon>Aspergillaceae</taxon>
        <taxon>Aspergillus</taxon>
        <taxon>Aspergillus subgen. Circumdati</taxon>
    </lineage>
</organism>
<feature type="chain" id="PRO_0000382504" description="Probable cytosolic iron-sulfur protein assembly protein 1">
    <location>
        <begin position="1"/>
        <end position="412"/>
    </location>
</feature>
<feature type="repeat" description="WD 1">
    <location>
        <begin position="20"/>
        <end position="62"/>
    </location>
</feature>
<feature type="repeat" description="WD 2">
    <location>
        <begin position="66"/>
        <end position="108"/>
    </location>
</feature>
<feature type="repeat" description="WD 3">
    <location>
        <begin position="165"/>
        <end position="204"/>
    </location>
</feature>
<feature type="repeat" description="WD 4">
    <location>
        <begin position="212"/>
        <end position="255"/>
    </location>
</feature>
<feature type="repeat" description="WD 5">
    <location>
        <begin position="257"/>
        <end position="291"/>
    </location>
</feature>
<feature type="repeat" description="WD 6">
    <location>
        <begin position="318"/>
        <end position="357"/>
    </location>
</feature>
<feature type="repeat" description="WD 7">
    <location>
        <begin position="367"/>
        <end position="407"/>
    </location>
</feature>
<feature type="region of interest" description="Disordered" evidence="2">
    <location>
        <begin position="108"/>
        <end position="154"/>
    </location>
</feature>
<protein>
    <recommendedName>
        <fullName evidence="1">Probable cytosolic iron-sulfur protein assembly protein 1</fullName>
    </recommendedName>
</protein>
<evidence type="ECO:0000255" key="1">
    <source>
        <dbReference type="HAMAP-Rule" id="MF_03037"/>
    </source>
</evidence>
<evidence type="ECO:0000256" key="2">
    <source>
        <dbReference type="SAM" id="MobiDB-lite"/>
    </source>
</evidence>
<reference key="1">
    <citation type="journal article" date="2007" name="Nat. Biotechnol.">
        <title>Genome sequencing and analysis of the versatile cell factory Aspergillus niger CBS 513.88.</title>
        <authorList>
            <person name="Pel H.J."/>
            <person name="de Winde J.H."/>
            <person name="Archer D.B."/>
            <person name="Dyer P.S."/>
            <person name="Hofmann G."/>
            <person name="Schaap P.J."/>
            <person name="Turner G."/>
            <person name="de Vries R.P."/>
            <person name="Albang R."/>
            <person name="Albermann K."/>
            <person name="Andersen M.R."/>
            <person name="Bendtsen J.D."/>
            <person name="Benen J.A.E."/>
            <person name="van den Berg M."/>
            <person name="Breestraat S."/>
            <person name="Caddick M.X."/>
            <person name="Contreras R."/>
            <person name="Cornell M."/>
            <person name="Coutinho P.M."/>
            <person name="Danchin E.G.J."/>
            <person name="Debets A.J.M."/>
            <person name="Dekker P."/>
            <person name="van Dijck P.W.M."/>
            <person name="van Dijk A."/>
            <person name="Dijkhuizen L."/>
            <person name="Driessen A.J.M."/>
            <person name="d'Enfert C."/>
            <person name="Geysens S."/>
            <person name="Goosen C."/>
            <person name="Groot G.S.P."/>
            <person name="de Groot P.W.J."/>
            <person name="Guillemette T."/>
            <person name="Henrissat B."/>
            <person name="Herweijer M."/>
            <person name="van den Hombergh J.P.T.W."/>
            <person name="van den Hondel C.A.M.J.J."/>
            <person name="van der Heijden R.T.J.M."/>
            <person name="van der Kaaij R.M."/>
            <person name="Klis F.M."/>
            <person name="Kools H.J."/>
            <person name="Kubicek C.P."/>
            <person name="van Kuyk P.A."/>
            <person name="Lauber J."/>
            <person name="Lu X."/>
            <person name="van der Maarel M.J.E.C."/>
            <person name="Meulenberg R."/>
            <person name="Menke H."/>
            <person name="Mortimer M.A."/>
            <person name="Nielsen J."/>
            <person name="Oliver S.G."/>
            <person name="Olsthoorn M."/>
            <person name="Pal K."/>
            <person name="van Peij N.N.M.E."/>
            <person name="Ram A.F.J."/>
            <person name="Rinas U."/>
            <person name="Roubos J.A."/>
            <person name="Sagt C.M.J."/>
            <person name="Schmoll M."/>
            <person name="Sun J."/>
            <person name="Ussery D."/>
            <person name="Varga J."/>
            <person name="Vervecken W."/>
            <person name="van de Vondervoort P.J.J."/>
            <person name="Wedler H."/>
            <person name="Woesten H.A.B."/>
            <person name="Zeng A.-P."/>
            <person name="van Ooyen A.J.J."/>
            <person name="Visser J."/>
            <person name="Stam H."/>
        </authorList>
    </citation>
    <scope>NUCLEOTIDE SEQUENCE [LARGE SCALE GENOMIC DNA]</scope>
    <source>
        <strain>ATCC MYA-4892 / CBS 513.88 / FGSC A1513</strain>
    </source>
</reference>
<proteinExistence type="inferred from homology"/>